<evidence type="ECO:0000255" key="1"/>
<evidence type="ECO:0000256" key="2">
    <source>
        <dbReference type="SAM" id="MobiDB-lite"/>
    </source>
</evidence>
<evidence type="ECO:0000305" key="3"/>
<feature type="chain" id="PRO_0000317141" description="Nucleosome assembly protein 1-like 5">
    <location>
        <begin position="1"/>
        <end position="192"/>
    </location>
</feature>
<feature type="region of interest" description="Disordered" evidence="2">
    <location>
        <begin position="1"/>
        <end position="76"/>
    </location>
</feature>
<feature type="region of interest" description="Disordered" evidence="2">
    <location>
        <begin position="136"/>
        <end position="192"/>
    </location>
</feature>
<feature type="coiled-coil region" evidence="1">
    <location>
        <begin position="86"/>
        <end position="112"/>
    </location>
</feature>
<feature type="compositionally biased region" description="Polar residues" evidence="2">
    <location>
        <begin position="1"/>
        <end position="12"/>
    </location>
</feature>
<feature type="compositionally biased region" description="Low complexity" evidence="2">
    <location>
        <begin position="15"/>
        <end position="28"/>
    </location>
</feature>
<feature type="compositionally biased region" description="Low complexity" evidence="2">
    <location>
        <begin position="40"/>
        <end position="55"/>
    </location>
</feature>
<feature type="compositionally biased region" description="Acidic residues" evidence="2">
    <location>
        <begin position="140"/>
        <end position="168"/>
    </location>
</feature>
<feature type="compositionally biased region" description="Basic and acidic residues" evidence="2">
    <location>
        <begin position="177"/>
        <end position="192"/>
    </location>
</feature>
<protein>
    <recommendedName>
        <fullName>Nucleosome assembly protein 1-like 5</fullName>
    </recommendedName>
</protein>
<keyword id="KW-0175">Coiled coil</keyword>
<keyword id="KW-0539">Nucleus</keyword>
<keyword id="KW-1185">Reference proteome</keyword>
<accession>Q1RMM5</accession>
<sequence length="192" mass="20399">MADSQNQGSAEPSQAAAAAAAADAAAAAEEVMAEGGAQGGDSDSASSDSDGVVGQMAEEPQTPAENAPKPRNDFIESLPNSVKCRVLALKKLQKRCDKIEAKFDKEFQALEKKYNDIYKPLLAKIQELTGEMEGCAWTLEGDEEDDDDDEYEDEEEGEEEDEEEEEPAAEAAGTAAAKDEGPHSAVPDDAKK</sequence>
<reference key="1">
    <citation type="submission" date="2007-06" db="EMBL/GenBank/DDBJ databases">
        <authorList>
            <consortium name="NIH - Mammalian Gene Collection (MGC) project"/>
        </authorList>
    </citation>
    <scope>NUCLEOTIDE SEQUENCE [LARGE SCALE MRNA]</scope>
    <source>
        <strain>Hereford</strain>
        <tissue>Fetal pons</tissue>
        <tissue>Thymus</tissue>
    </source>
</reference>
<gene>
    <name type="primary">NAP1L5</name>
</gene>
<comment type="subcellular location">
    <subcellularLocation>
        <location evidence="3">Nucleus</location>
    </subcellularLocation>
</comment>
<comment type="similarity">
    <text evidence="3">Belongs to the nucleosome assembly protein (NAP) family.</text>
</comment>
<dbReference type="EMBL" id="BC114819">
    <property type="protein sequence ID" value="AAI14820.1"/>
    <property type="molecule type" value="mRNA"/>
</dbReference>
<dbReference type="EMBL" id="BC142424">
    <property type="protein sequence ID" value="AAI42425.1"/>
    <property type="molecule type" value="mRNA"/>
</dbReference>
<dbReference type="RefSeq" id="NP_001071346.1">
    <property type="nucleotide sequence ID" value="NM_001077878.2"/>
</dbReference>
<dbReference type="SMR" id="Q1RMM5"/>
<dbReference type="FunCoup" id="Q1RMM5">
    <property type="interactions" value="235"/>
</dbReference>
<dbReference type="STRING" id="9913.ENSBTAP00000013363"/>
<dbReference type="PaxDb" id="9913-ENSBTAP00000013363"/>
<dbReference type="GeneID" id="508508"/>
<dbReference type="KEGG" id="bta:508508"/>
<dbReference type="CTD" id="266812"/>
<dbReference type="VEuPathDB" id="HostDB:ENSBTAG00000010128"/>
<dbReference type="eggNOG" id="KOG1507">
    <property type="taxonomic scope" value="Eukaryota"/>
</dbReference>
<dbReference type="HOGENOM" id="CLU_133891_0_0_1"/>
<dbReference type="InParanoid" id="Q1RMM5"/>
<dbReference type="OMA" id="ATKPKND"/>
<dbReference type="OrthoDB" id="27325at2759"/>
<dbReference type="Proteomes" id="UP000009136">
    <property type="component" value="Chromosome 6"/>
</dbReference>
<dbReference type="Bgee" id="ENSBTAG00000010128">
    <property type="expression patterns" value="Expressed in hypothalamus and 102 other cell types or tissues"/>
</dbReference>
<dbReference type="GO" id="GO:0005634">
    <property type="term" value="C:nucleus"/>
    <property type="evidence" value="ECO:0007669"/>
    <property type="project" value="UniProtKB-SubCell"/>
</dbReference>
<dbReference type="GO" id="GO:0006334">
    <property type="term" value="P:nucleosome assembly"/>
    <property type="evidence" value="ECO:0007669"/>
    <property type="project" value="InterPro"/>
</dbReference>
<dbReference type="FunFam" id="1.20.5.1500:FF:000001">
    <property type="entry name" value="Nucleosome assembly protein 1-like 1"/>
    <property type="match status" value="1"/>
</dbReference>
<dbReference type="Gene3D" id="1.20.5.1500">
    <property type="match status" value="1"/>
</dbReference>
<dbReference type="InterPro" id="IPR037231">
    <property type="entry name" value="NAP-like_sf"/>
</dbReference>
<dbReference type="InterPro" id="IPR002164">
    <property type="entry name" value="NAP_family"/>
</dbReference>
<dbReference type="PANTHER" id="PTHR11875">
    <property type="entry name" value="TESTIS-SPECIFIC Y-ENCODED PROTEIN"/>
    <property type="match status" value="1"/>
</dbReference>
<dbReference type="Pfam" id="PF00956">
    <property type="entry name" value="NAP"/>
    <property type="match status" value="1"/>
</dbReference>
<dbReference type="SUPFAM" id="SSF143113">
    <property type="entry name" value="NAP-like"/>
    <property type="match status" value="1"/>
</dbReference>
<proteinExistence type="evidence at transcript level"/>
<name>NP1L5_BOVIN</name>
<organism>
    <name type="scientific">Bos taurus</name>
    <name type="common">Bovine</name>
    <dbReference type="NCBI Taxonomy" id="9913"/>
    <lineage>
        <taxon>Eukaryota</taxon>
        <taxon>Metazoa</taxon>
        <taxon>Chordata</taxon>
        <taxon>Craniata</taxon>
        <taxon>Vertebrata</taxon>
        <taxon>Euteleostomi</taxon>
        <taxon>Mammalia</taxon>
        <taxon>Eutheria</taxon>
        <taxon>Laurasiatheria</taxon>
        <taxon>Artiodactyla</taxon>
        <taxon>Ruminantia</taxon>
        <taxon>Pecora</taxon>
        <taxon>Bovidae</taxon>
        <taxon>Bovinae</taxon>
        <taxon>Bos</taxon>
    </lineage>
</organism>